<geneLocation type="chloroplast"/>
<sequence>VGFKAGVKDYKLTYYTPEYETKDTDILAAFRVTPQPGVPPEEAGAAVAAESSTGTWTTVWTDGLTSLDRYKGRCYHIEPVAGEENQYIAYVAYPLDLFEEGSVTNMFTSIVGNVFGFKALRALRLEDLRVPTSYIKTFQGPPHGIQVERDKLNKYGRPLLGCTIKPKLGLSAKNYGRAVYECLRGGLDFTKDDENVNSQPFMRWRDRFLFCAEAIYKAQAETGEIKGHYLNATAGTCEEMIKRAVCARELGAPIVMHDYLTGGFTANTTLAHYCRDNGLLLHIHRAMHAVIDRQKNHGMHFRVLAKALRLSGGDHIHAGTVVGKLEGEREITLGFVDLLRDDFVEKDRSRGIYFTQDWVSLPGVLPVASGGIHVWHMPALTEIFGDDSVLQFGGGTLGHPWGNAPGAVANRVALEACVQARNEGRDLAREGNEIIREASKWSPELAAACEVWKAIKFEFPAMDTL</sequence>
<comment type="function">
    <text evidence="1">RuBisCO catalyzes two reactions: the carboxylation of D-ribulose 1,5-bisphosphate, the primary event in carbon dioxide fixation, as well as the oxidative fragmentation of the pentose substrate in the photorespiration process. Both reactions occur simultaneously and in competition at the same active site.</text>
</comment>
<comment type="catalytic activity">
    <reaction evidence="1">
        <text>2 (2R)-3-phosphoglycerate + 2 H(+) = D-ribulose 1,5-bisphosphate + CO2 + H2O</text>
        <dbReference type="Rhea" id="RHEA:23124"/>
        <dbReference type="ChEBI" id="CHEBI:15377"/>
        <dbReference type="ChEBI" id="CHEBI:15378"/>
        <dbReference type="ChEBI" id="CHEBI:16526"/>
        <dbReference type="ChEBI" id="CHEBI:57870"/>
        <dbReference type="ChEBI" id="CHEBI:58272"/>
        <dbReference type="EC" id="4.1.1.39"/>
    </reaction>
</comment>
<comment type="catalytic activity">
    <reaction evidence="1">
        <text>D-ribulose 1,5-bisphosphate + O2 = 2-phosphoglycolate + (2R)-3-phosphoglycerate + 2 H(+)</text>
        <dbReference type="Rhea" id="RHEA:36631"/>
        <dbReference type="ChEBI" id="CHEBI:15378"/>
        <dbReference type="ChEBI" id="CHEBI:15379"/>
        <dbReference type="ChEBI" id="CHEBI:57870"/>
        <dbReference type="ChEBI" id="CHEBI:58033"/>
        <dbReference type="ChEBI" id="CHEBI:58272"/>
    </reaction>
</comment>
<comment type="cofactor">
    <cofactor evidence="1">
        <name>Mg(2+)</name>
        <dbReference type="ChEBI" id="CHEBI:18420"/>
    </cofactor>
    <text evidence="1">Binds 1 Mg(2+) ion per subunit.</text>
</comment>
<comment type="subunit">
    <text evidence="1">Heterohexadecamer of 8 large chains and 8 small chains; disulfide-linked. The disulfide link is formed within the large subunit homodimers.</text>
</comment>
<comment type="subcellular location">
    <subcellularLocation>
        <location>Plastid</location>
        <location>Chloroplast</location>
    </subcellularLocation>
</comment>
<comment type="PTM">
    <text evidence="1">The disulfide bond which can form in the large chain dimeric partners within the hexadecamer appears to be associated with oxidative stress and protein turnover.</text>
</comment>
<comment type="miscellaneous">
    <text evidence="1">The basic functional RuBisCO is composed of a large chain homodimer in a 'head-to-tail' conformation. In form I RuBisCO this homodimer is arranged in a barrel-like tetramer with the small subunits forming a tetrameric 'cap' on each end of the 'barrel'.</text>
</comment>
<comment type="similarity">
    <text evidence="1">Belongs to the RuBisCO large chain family. Type I subfamily.</text>
</comment>
<feature type="chain" id="PRO_0000062413" description="Ribulose bisphosphate carboxylase large chain">
    <location>
        <begin position="1" status="less than"/>
        <end position="465"/>
    </location>
</feature>
<feature type="active site" description="Proton acceptor" evidence="1">
    <location>
        <position position="165"/>
    </location>
</feature>
<feature type="active site" description="Proton acceptor" evidence="1">
    <location>
        <position position="284"/>
    </location>
</feature>
<feature type="binding site" description="in homodimeric partner" evidence="1">
    <location>
        <position position="113"/>
    </location>
    <ligand>
        <name>substrate</name>
    </ligand>
</feature>
<feature type="binding site" evidence="1">
    <location>
        <position position="163"/>
    </location>
    <ligand>
        <name>substrate</name>
    </ligand>
</feature>
<feature type="binding site" evidence="1">
    <location>
        <position position="167"/>
    </location>
    <ligand>
        <name>substrate</name>
    </ligand>
</feature>
<feature type="binding site" description="via carbamate group" evidence="1">
    <location>
        <position position="191"/>
    </location>
    <ligand>
        <name>Mg(2+)</name>
        <dbReference type="ChEBI" id="CHEBI:18420"/>
    </ligand>
</feature>
<feature type="binding site" evidence="1">
    <location>
        <position position="193"/>
    </location>
    <ligand>
        <name>Mg(2+)</name>
        <dbReference type="ChEBI" id="CHEBI:18420"/>
    </ligand>
</feature>
<feature type="binding site" evidence="1">
    <location>
        <position position="194"/>
    </location>
    <ligand>
        <name>Mg(2+)</name>
        <dbReference type="ChEBI" id="CHEBI:18420"/>
    </ligand>
</feature>
<feature type="binding site" evidence="1">
    <location>
        <position position="285"/>
    </location>
    <ligand>
        <name>substrate</name>
    </ligand>
</feature>
<feature type="binding site" evidence="1">
    <location>
        <position position="317"/>
    </location>
    <ligand>
        <name>substrate</name>
    </ligand>
</feature>
<feature type="binding site" evidence="1">
    <location>
        <position position="369"/>
    </location>
    <ligand>
        <name>substrate</name>
    </ligand>
</feature>
<feature type="site" description="Transition state stabilizer" evidence="1">
    <location>
        <position position="324"/>
    </location>
</feature>
<feature type="modified residue" description="N6,N6,N6-trimethyllysine" evidence="1">
    <location>
        <position position="4"/>
    </location>
</feature>
<feature type="modified residue" description="N6-carboxylysine" evidence="1">
    <location>
        <position position="191"/>
    </location>
</feature>
<feature type="disulfide bond" description="Interchain; in linked form" evidence="1">
    <location>
        <position position="237"/>
    </location>
</feature>
<feature type="non-terminal residue">
    <location>
        <position position="1"/>
    </location>
</feature>
<reference key="1">
    <citation type="journal article" date="1997" name="Am. J. Bot.">
        <title>A phylogeny of the chloroplast gene rbcL in the Leguminosae: taxonomic correlations and insights into the evolution of nodulation.</title>
        <authorList>
            <person name="Doyle J.J."/>
            <person name="Doyle J.L."/>
            <person name="Ballenger J.A."/>
            <person name="Dickson E.E."/>
            <person name="Kajita T."/>
            <person name="Ohashi H."/>
        </authorList>
    </citation>
    <scope>NUCLEOTIDE SEQUENCE [GENOMIC DNA]</scope>
</reference>
<evidence type="ECO:0000255" key="1">
    <source>
        <dbReference type="HAMAP-Rule" id="MF_01338"/>
    </source>
</evidence>
<proteinExistence type="inferred from homology"/>
<keyword id="KW-0113">Calvin cycle</keyword>
<keyword id="KW-0120">Carbon dioxide fixation</keyword>
<keyword id="KW-0150">Chloroplast</keyword>
<keyword id="KW-1015">Disulfide bond</keyword>
<keyword id="KW-0456">Lyase</keyword>
<keyword id="KW-0460">Magnesium</keyword>
<keyword id="KW-0479">Metal-binding</keyword>
<keyword id="KW-0488">Methylation</keyword>
<keyword id="KW-0503">Monooxygenase</keyword>
<keyword id="KW-0560">Oxidoreductase</keyword>
<keyword id="KW-0601">Photorespiration</keyword>
<keyword id="KW-0602">Photosynthesis</keyword>
<keyword id="KW-0934">Plastid</keyword>
<dbReference type="EC" id="4.1.1.39" evidence="1"/>
<dbReference type="EMBL" id="U74237">
    <property type="protein sequence ID" value="AAB67919.1"/>
    <property type="molecule type" value="Genomic_DNA"/>
</dbReference>
<dbReference type="SMR" id="O20346"/>
<dbReference type="GO" id="GO:0009507">
    <property type="term" value="C:chloroplast"/>
    <property type="evidence" value="ECO:0007669"/>
    <property type="project" value="UniProtKB-SubCell"/>
</dbReference>
<dbReference type="GO" id="GO:0000287">
    <property type="term" value="F:magnesium ion binding"/>
    <property type="evidence" value="ECO:0007669"/>
    <property type="project" value="InterPro"/>
</dbReference>
<dbReference type="GO" id="GO:0004497">
    <property type="term" value="F:monooxygenase activity"/>
    <property type="evidence" value="ECO:0007669"/>
    <property type="project" value="UniProtKB-KW"/>
</dbReference>
<dbReference type="GO" id="GO:0016984">
    <property type="term" value="F:ribulose-bisphosphate carboxylase activity"/>
    <property type="evidence" value="ECO:0007669"/>
    <property type="project" value="UniProtKB-EC"/>
</dbReference>
<dbReference type="GO" id="GO:0009853">
    <property type="term" value="P:photorespiration"/>
    <property type="evidence" value="ECO:0007669"/>
    <property type="project" value="UniProtKB-KW"/>
</dbReference>
<dbReference type="GO" id="GO:0019253">
    <property type="term" value="P:reductive pentose-phosphate cycle"/>
    <property type="evidence" value="ECO:0007669"/>
    <property type="project" value="UniProtKB-KW"/>
</dbReference>
<dbReference type="CDD" id="cd08212">
    <property type="entry name" value="RuBisCO_large_I"/>
    <property type="match status" value="1"/>
</dbReference>
<dbReference type="FunFam" id="3.20.20.110:FF:000001">
    <property type="entry name" value="Ribulose bisphosphate carboxylase large chain"/>
    <property type="match status" value="1"/>
</dbReference>
<dbReference type="FunFam" id="3.30.70.150:FF:000001">
    <property type="entry name" value="Ribulose bisphosphate carboxylase large chain"/>
    <property type="match status" value="1"/>
</dbReference>
<dbReference type="Gene3D" id="3.20.20.110">
    <property type="entry name" value="Ribulose bisphosphate carboxylase, large subunit, C-terminal domain"/>
    <property type="match status" value="1"/>
</dbReference>
<dbReference type="Gene3D" id="3.30.70.150">
    <property type="entry name" value="RuBisCO large subunit, N-terminal domain"/>
    <property type="match status" value="1"/>
</dbReference>
<dbReference type="HAMAP" id="MF_01338">
    <property type="entry name" value="RuBisCO_L_type1"/>
    <property type="match status" value="1"/>
</dbReference>
<dbReference type="InterPro" id="IPR033966">
    <property type="entry name" value="RuBisCO"/>
</dbReference>
<dbReference type="InterPro" id="IPR020878">
    <property type="entry name" value="RuBisCo_large_chain_AS"/>
</dbReference>
<dbReference type="InterPro" id="IPR000685">
    <property type="entry name" value="RuBisCO_lsu_C"/>
</dbReference>
<dbReference type="InterPro" id="IPR036376">
    <property type="entry name" value="RuBisCO_lsu_C_sf"/>
</dbReference>
<dbReference type="InterPro" id="IPR017443">
    <property type="entry name" value="RuBisCO_lsu_fd_N"/>
</dbReference>
<dbReference type="InterPro" id="IPR036422">
    <property type="entry name" value="RuBisCO_lsu_N_sf"/>
</dbReference>
<dbReference type="InterPro" id="IPR020888">
    <property type="entry name" value="RuBisCO_lsuI"/>
</dbReference>
<dbReference type="NCBIfam" id="NF003252">
    <property type="entry name" value="PRK04208.1"/>
    <property type="match status" value="1"/>
</dbReference>
<dbReference type="PANTHER" id="PTHR42704">
    <property type="entry name" value="RIBULOSE BISPHOSPHATE CARBOXYLASE"/>
    <property type="match status" value="1"/>
</dbReference>
<dbReference type="PANTHER" id="PTHR42704:SF15">
    <property type="entry name" value="RIBULOSE BISPHOSPHATE CARBOXYLASE LARGE CHAIN"/>
    <property type="match status" value="1"/>
</dbReference>
<dbReference type="Pfam" id="PF00016">
    <property type="entry name" value="RuBisCO_large"/>
    <property type="match status" value="1"/>
</dbReference>
<dbReference type="Pfam" id="PF02788">
    <property type="entry name" value="RuBisCO_large_N"/>
    <property type="match status" value="1"/>
</dbReference>
<dbReference type="SFLD" id="SFLDG01052">
    <property type="entry name" value="RuBisCO"/>
    <property type="match status" value="1"/>
</dbReference>
<dbReference type="SFLD" id="SFLDS00014">
    <property type="entry name" value="RuBisCO"/>
    <property type="match status" value="1"/>
</dbReference>
<dbReference type="SFLD" id="SFLDG00301">
    <property type="entry name" value="RuBisCO-like_proteins"/>
    <property type="match status" value="1"/>
</dbReference>
<dbReference type="SUPFAM" id="SSF51649">
    <property type="entry name" value="RuBisCo, C-terminal domain"/>
    <property type="match status" value="1"/>
</dbReference>
<dbReference type="SUPFAM" id="SSF54966">
    <property type="entry name" value="RuBisCO, large subunit, small (N-terminal) domain"/>
    <property type="match status" value="1"/>
</dbReference>
<dbReference type="PROSITE" id="PS00157">
    <property type="entry name" value="RUBISCO_LARGE"/>
    <property type="match status" value="1"/>
</dbReference>
<gene>
    <name evidence="1" type="primary">rbcL</name>
</gene>
<protein>
    <recommendedName>
        <fullName evidence="1">Ribulose bisphosphate carboxylase large chain</fullName>
        <shortName evidence="1">RuBisCO large subunit</shortName>
        <ecNumber evidence="1">4.1.1.39</ecNumber>
    </recommendedName>
</protein>
<name>RBL_CLITE</name>
<organism>
    <name type="scientific">Clitoria ternatea</name>
    <name type="common">Butterfly pea</name>
    <dbReference type="NCBI Taxonomy" id="43366"/>
    <lineage>
        <taxon>Eukaryota</taxon>
        <taxon>Viridiplantae</taxon>
        <taxon>Streptophyta</taxon>
        <taxon>Embryophyta</taxon>
        <taxon>Tracheophyta</taxon>
        <taxon>Spermatophyta</taxon>
        <taxon>Magnoliopsida</taxon>
        <taxon>eudicotyledons</taxon>
        <taxon>Gunneridae</taxon>
        <taxon>Pentapetalae</taxon>
        <taxon>rosids</taxon>
        <taxon>fabids</taxon>
        <taxon>Fabales</taxon>
        <taxon>Fabaceae</taxon>
        <taxon>Papilionoideae</taxon>
        <taxon>50 kb inversion clade</taxon>
        <taxon>NPAAA clade</taxon>
        <taxon>indigoferoid/millettioid clade</taxon>
        <taxon>Phaseoleae</taxon>
        <taxon>Clitoria</taxon>
    </lineage>
</organism>
<accession>O20346</accession>